<dbReference type="EC" id="2.7.11.24" evidence="2"/>
<dbReference type="EMBL" id="AF247136">
    <property type="protein sequence ID" value="AAF81420.1"/>
    <property type="molecule type" value="Genomic_DNA"/>
</dbReference>
<dbReference type="EMBL" id="AYRZ02000001">
    <property type="protein sequence ID" value="PHT95595.1"/>
    <property type="molecule type" value="Genomic_DNA"/>
</dbReference>
<dbReference type="SMR" id="Q9LKZ1"/>
<dbReference type="Proteomes" id="UP000222542">
    <property type="component" value="Chromosome 1"/>
</dbReference>
<dbReference type="GO" id="GO:0005524">
    <property type="term" value="F:ATP binding"/>
    <property type="evidence" value="ECO:0007669"/>
    <property type="project" value="UniProtKB-KW"/>
</dbReference>
<dbReference type="GO" id="GO:0004707">
    <property type="term" value="F:MAP kinase activity"/>
    <property type="evidence" value="ECO:0007669"/>
    <property type="project" value="UniProtKB-EC"/>
</dbReference>
<dbReference type="GO" id="GO:0106310">
    <property type="term" value="F:protein serine kinase activity"/>
    <property type="evidence" value="ECO:0007669"/>
    <property type="project" value="RHEA"/>
</dbReference>
<dbReference type="GO" id="GO:0009409">
    <property type="term" value="P:response to cold"/>
    <property type="evidence" value="ECO:0000314"/>
    <property type="project" value="UniProtKB"/>
</dbReference>
<dbReference type="GO" id="GO:0010225">
    <property type="term" value="P:response to UV-C"/>
    <property type="evidence" value="ECO:0000314"/>
    <property type="project" value="UniProtKB"/>
</dbReference>
<dbReference type="GO" id="GO:0009611">
    <property type="term" value="P:response to wounding"/>
    <property type="evidence" value="ECO:0000314"/>
    <property type="project" value="UniProtKB"/>
</dbReference>
<dbReference type="CDD" id="cd07858">
    <property type="entry name" value="STKc_TEY_MAPK"/>
    <property type="match status" value="1"/>
</dbReference>
<dbReference type="FunFam" id="1.10.510.10:FF:000013">
    <property type="entry name" value="Mitogen-activated protein kinase"/>
    <property type="match status" value="1"/>
</dbReference>
<dbReference type="FunFam" id="3.30.200.20:FF:000046">
    <property type="entry name" value="Mitogen-activated protein kinase"/>
    <property type="match status" value="1"/>
</dbReference>
<dbReference type="Gene3D" id="3.30.200.20">
    <property type="entry name" value="Phosphorylase Kinase, domain 1"/>
    <property type="match status" value="1"/>
</dbReference>
<dbReference type="Gene3D" id="1.10.510.10">
    <property type="entry name" value="Transferase(Phosphotransferase) domain 1"/>
    <property type="match status" value="1"/>
</dbReference>
<dbReference type="InterPro" id="IPR011009">
    <property type="entry name" value="Kinase-like_dom_sf"/>
</dbReference>
<dbReference type="InterPro" id="IPR050117">
    <property type="entry name" value="MAP_kinase"/>
</dbReference>
<dbReference type="InterPro" id="IPR003527">
    <property type="entry name" value="MAP_kinase_CS"/>
</dbReference>
<dbReference type="InterPro" id="IPR000719">
    <property type="entry name" value="Prot_kinase_dom"/>
</dbReference>
<dbReference type="InterPro" id="IPR008271">
    <property type="entry name" value="Ser/Thr_kinase_AS"/>
</dbReference>
<dbReference type="PANTHER" id="PTHR24055">
    <property type="entry name" value="MITOGEN-ACTIVATED PROTEIN KINASE"/>
    <property type="match status" value="1"/>
</dbReference>
<dbReference type="Pfam" id="PF00069">
    <property type="entry name" value="Pkinase"/>
    <property type="match status" value="1"/>
</dbReference>
<dbReference type="SMART" id="SM00220">
    <property type="entry name" value="S_TKc"/>
    <property type="match status" value="1"/>
</dbReference>
<dbReference type="SUPFAM" id="SSF56112">
    <property type="entry name" value="Protein kinase-like (PK-like)"/>
    <property type="match status" value="1"/>
</dbReference>
<dbReference type="PROSITE" id="PS01351">
    <property type="entry name" value="MAPK"/>
    <property type="match status" value="1"/>
</dbReference>
<dbReference type="PROSITE" id="PS50011">
    <property type="entry name" value="PROTEIN_KINASE_DOM"/>
    <property type="match status" value="1"/>
</dbReference>
<dbReference type="PROSITE" id="PS00108">
    <property type="entry name" value="PROTEIN_KINASE_ST"/>
    <property type="match status" value="1"/>
</dbReference>
<accession>Q9LKZ1</accession>
<accession>A0A2G3AMY5</accession>
<evidence type="ECO:0000250" key="1">
    <source>
        <dbReference type="UniProtKB" id="Q16539"/>
    </source>
</evidence>
<evidence type="ECO:0000250" key="2">
    <source>
        <dbReference type="UniProtKB" id="Q39023"/>
    </source>
</evidence>
<evidence type="ECO:0000250" key="3">
    <source>
        <dbReference type="UniProtKB" id="Q9LKZ2"/>
    </source>
</evidence>
<evidence type="ECO:0000255" key="4">
    <source>
        <dbReference type="PROSITE-ProRule" id="PRU00159"/>
    </source>
</evidence>
<evidence type="ECO:0000256" key="5">
    <source>
        <dbReference type="SAM" id="MobiDB-lite"/>
    </source>
</evidence>
<evidence type="ECO:0000269" key="6">
    <source>
    </source>
</evidence>
<evidence type="ECO:0000303" key="7">
    <source>
    </source>
</evidence>
<evidence type="ECO:0000305" key="8"/>
<evidence type="ECO:0000312" key="9">
    <source>
        <dbReference type="EMBL" id="PHT95595.1"/>
    </source>
</evidence>
<comment type="function">
    <text evidence="2">Protein kinase involved in oxidative stress-mediated and innate immune MAP kinase signaling cascades.</text>
</comment>
<comment type="catalytic activity">
    <reaction evidence="2">
        <text>L-seryl-[protein] + ATP = O-phospho-L-seryl-[protein] + ADP + H(+)</text>
        <dbReference type="Rhea" id="RHEA:17989"/>
        <dbReference type="Rhea" id="RHEA-COMP:9863"/>
        <dbReference type="Rhea" id="RHEA-COMP:11604"/>
        <dbReference type="ChEBI" id="CHEBI:15378"/>
        <dbReference type="ChEBI" id="CHEBI:29999"/>
        <dbReference type="ChEBI" id="CHEBI:30616"/>
        <dbReference type="ChEBI" id="CHEBI:83421"/>
        <dbReference type="ChEBI" id="CHEBI:456216"/>
        <dbReference type="EC" id="2.7.11.24"/>
    </reaction>
</comment>
<comment type="catalytic activity">
    <reaction evidence="2">
        <text>L-threonyl-[protein] + ATP = O-phospho-L-threonyl-[protein] + ADP + H(+)</text>
        <dbReference type="Rhea" id="RHEA:46608"/>
        <dbReference type="Rhea" id="RHEA-COMP:11060"/>
        <dbReference type="Rhea" id="RHEA-COMP:11605"/>
        <dbReference type="ChEBI" id="CHEBI:15378"/>
        <dbReference type="ChEBI" id="CHEBI:30013"/>
        <dbReference type="ChEBI" id="CHEBI:30616"/>
        <dbReference type="ChEBI" id="CHEBI:61977"/>
        <dbReference type="ChEBI" id="CHEBI:456216"/>
        <dbReference type="EC" id="2.7.11.24"/>
    </reaction>
</comment>
<comment type="cofactor">
    <cofactor evidence="1">
        <name>Mg(2+)</name>
        <dbReference type="ChEBI" id="CHEBI:18420"/>
    </cofactor>
</comment>
<comment type="activity regulation">
    <text evidence="2">Activated by threonine and tyrosine phosphorylation.</text>
</comment>
<comment type="tissue specificity">
    <text evidence="6">Expressed constitutively in roots, stems, flowers and fruits of the hot pepper (cv. Subicho).</text>
</comment>
<comment type="induction">
    <text evidence="6">Not induced by wounding and UV-C treatment.</text>
</comment>
<comment type="domain">
    <text evidence="2">The TXY motif contains the threonine and tyrosine residues whose phosphorylation activates the MAP kinases.</text>
</comment>
<comment type="PTM">
    <text evidence="6">Activated by cold, wounding and UV-C in a cultivar-dependent manner; phosphorylated at Tyr-221 in cv. Subicho but not in cv. Pungchon.</text>
</comment>
<comment type="similarity">
    <text evidence="8">Belongs to the protein kinase superfamily. CMGC Ser/Thr protein kinase family. MAP kinase subfamily.</text>
</comment>
<sequence length="394" mass="45197">MDGPAQQTDTVMAEAAAAQQPAPPSQPVAGIDNIPATLSHGGRFIQYNIFGNVFEVTAKYKPPIMPIGKGAYGIVCSALNSETNEHVATKKIANAFDNKIDAKRTLREIKLLRHMDHENIVAIRDIIPPPQREAFNDVYIAYELMDTDLHQIIRSNQGLSEEHCQYFLYQILRGLKYIHSANVLHRDLKPRNLLLNANCDLKICDFGLARVTSETDFMTEYVVTRWYRPPELLLNSSDYTAAIDVWSVGCIFMELMDRKPLFPGRDHVQQLRLLMELIGTPSEAEMEFLNENAKRYIRQLPLYRRQSFVEKFPHVNPAAIDLVEKMLTFDPRRRLTVEDALAHPYLTSLHDISDEPVCTTPFSFDFEQHALTEEQMKELIYREGLAFNPEYQHM</sequence>
<keyword id="KW-0067">ATP-binding</keyword>
<keyword id="KW-0418">Kinase</keyword>
<keyword id="KW-0547">Nucleotide-binding</keyword>
<keyword id="KW-0597">Phosphoprotein</keyword>
<keyword id="KW-1185">Reference proteome</keyword>
<keyword id="KW-0723">Serine/threonine-protein kinase</keyword>
<keyword id="KW-0346">Stress response</keyword>
<keyword id="KW-0808">Transferase</keyword>
<gene>
    <name evidence="7" type="primary">MK2</name>
    <name evidence="9" type="ORF">T459_03477</name>
</gene>
<protein>
    <recommendedName>
        <fullName evidence="7">Mitogen-activated protein kinase 2</fullName>
        <ecNumber evidence="2">2.7.11.24</ecNumber>
    </recommendedName>
</protein>
<organism>
    <name type="scientific">Capsicum annuum</name>
    <name type="common">Capsicum pepper</name>
    <dbReference type="NCBI Taxonomy" id="4072"/>
    <lineage>
        <taxon>Eukaryota</taxon>
        <taxon>Viridiplantae</taxon>
        <taxon>Streptophyta</taxon>
        <taxon>Embryophyta</taxon>
        <taxon>Tracheophyta</taxon>
        <taxon>Spermatophyta</taxon>
        <taxon>Magnoliopsida</taxon>
        <taxon>eudicotyledons</taxon>
        <taxon>Gunneridae</taxon>
        <taxon>Pentapetalae</taxon>
        <taxon>asterids</taxon>
        <taxon>lamiids</taxon>
        <taxon>Solanales</taxon>
        <taxon>Solanaceae</taxon>
        <taxon>Solanoideae</taxon>
        <taxon>Capsiceae</taxon>
        <taxon>Capsicum</taxon>
    </lineage>
</organism>
<proteinExistence type="evidence at protein level"/>
<feature type="chain" id="PRO_0000460178" description="Mitogen-activated protein kinase 2">
    <location>
        <begin position="1"/>
        <end position="394"/>
    </location>
</feature>
<feature type="domain" description="Protein kinase" evidence="4">
    <location>
        <begin position="61"/>
        <end position="346"/>
    </location>
</feature>
<feature type="region of interest" description="Disordered" evidence="5">
    <location>
        <begin position="1"/>
        <end position="27"/>
    </location>
</feature>
<feature type="short sequence motif" description="TXY" evidence="2">
    <location>
        <begin position="219"/>
        <end position="221"/>
    </location>
</feature>
<feature type="compositionally biased region" description="Polar residues" evidence="5">
    <location>
        <begin position="1"/>
        <end position="10"/>
    </location>
</feature>
<feature type="active site" description="Proton acceptor" evidence="4">
    <location>
        <position position="187"/>
    </location>
</feature>
<feature type="binding site" evidence="4">
    <location>
        <begin position="67"/>
        <end position="75"/>
    </location>
    <ligand>
        <name>ATP</name>
        <dbReference type="ChEBI" id="CHEBI:30616"/>
    </ligand>
</feature>
<feature type="binding site" evidence="4">
    <location>
        <position position="90"/>
    </location>
    <ligand>
        <name>ATP</name>
        <dbReference type="ChEBI" id="CHEBI:30616"/>
    </ligand>
</feature>
<feature type="modified residue" description="Phosphothreonine" evidence="3">
    <location>
        <position position="219"/>
    </location>
</feature>
<feature type="modified residue" description="Phosphotyrosine" evidence="6">
    <location>
        <position position="221"/>
    </location>
</feature>
<feature type="modified residue" description="Phosphothreonine" evidence="3">
    <location>
        <position position="224"/>
    </location>
</feature>
<feature type="sequence conflict" description="In Ref. 2; PHT95595." evidence="8" ref="2">
    <original>P</original>
    <variation>S</variation>
    <location>
        <position position="4"/>
    </location>
</feature>
<feature type="sequence conflict" description="In Ref. 2; PHT95595." evidence="8" ref="2">
    <original>T</original>
    <variation>I</variation>
    <location>
        <position position="89"/>
    </location>
</feature>
<feature type="sequence conflict" description="In Ref. 2; PHT95595." evidence="8" ref="2">
    <original>R</original>
    <variation>S</variation>
    <location>
        <position position="191"/>
    </location>
</feature>
<name>MK2_CAPAN</name>
<reference key="1">
    <citation type="journal article" date="2001" name="Mol. Cells">
        <title>Molecular cloning and cultivar specific expression of MAP kinases from Capsicum annuum.</title>
        <authorList>
            <person name="Shin H.J."/>
            <person name="Lee D.E."/>
            <person name="Shin D.H."/>
            <person name="Kim K.U."/>
            <person name="Kim H.Y."/>
            <person name="Ohashi Y."/>
            <person name="Han O."/>
            <person name="Baik M.G."/>
            <person name="Back K."/>
        </authorList>
    </citation>
    <scope>NUCLEOTIDE SEQUENCE [GENOMIC DNA]</scope>
    <scope>INDUCTION BY WOUNDING AND UV-C</scope>
    <scope>PHOSPHORYLATION AT TYR-221</scope>
    <source>
        <strain>cv. Pungchon</strain>
        <strain>cv. Subicho</strain>
    </source>
</reference>
<reference key="2">
    <citation type="journal article" date="2017" name="Genome Biol.">
        <title>New reference genome sequences of hot pepper reveal the massive evolution of plant disease-resistance genes by retroduplication.</title>
        <authorList>
            <person name="Kim S."/>
            <person name="Park J."/>
            <person name="Yeom S.I."/>
            <person name="Kim Y.M."/>
            <person name="Seo E."/>
            <person name="Kim K.T."/>
            <person name="Kim M.S."/>
            <person name="Lee J.M."/>
            <person name="Cheong K."/>
            <person name="Shin H.S."/>
            <person name="Kim S.B."/>
            <person name="Han K."/>
            <person name="Lee J."/>
            <person name="Park M."/>
            <person name="Lee H.A."/>
            <person name="Lee H.Y."/>
            <person name="Lee Y."/>
            <person name="Oh S."/>
            <person name="Lee J.H."/>
            <person name="Choi E."/>
            <person name="Choi E."/>
            <person name="Lee S.E."/>
            <person name="Jeon J."/>
            <person name="Kim H."/>
            <person name="Choi G."/>
            <person name="Song H."/>
            <person name="Lee J."/>
            <person name="Lee S.C."/>
            <person name="Kwon J.K."/>
            <person name="Lee H.Y."/>
            <person name="Koo N."/>
            <person name="Hong Y."/>
            <person name="Kim R.W."/>
            <person name="Kang W.H."/>
            <person name="Huh J.H."/>
            <person name="Kang B.C."/>
            <person name="Yang T.J."/>
            <person name="Lee Y.H."/>
            <person name="Bennetzen J.L."/>
            <person name="Choi D."/>
        </authorList>
    </citation>
    <scope>NUCLEOTIDE SEQUENCE [LARGE SCALE GENOMIC DNA]</scope>
    <source>
        <strain>cv. CM334</strain>
    </source>
</reference>